<sequence length="393" mass="45536">MNLSATEKDLMIVNMGPHHPSMHGVLRLIVTLDGEDVVDCEPILGYLHRGMEKIAENRTIIQYLPYVTRWDYLATMFTEAITVNGPEQLGNIQVPKRASYIRVIMLELSRIASHLLWLGPFMADIGAQTPFFYIFRERELVYDLFEAATGMRMMHNYFRIGGVAADLPYGWLDKCLDFCDYFLTGIVEYQKLITRNPIFLERVEGIGVIGGEEAINWGLSGPMLRASGIKWDLRKVDHYECYDEFDWEIQWQKEGDSLARYLVRISEMTESIKIIQQALEGIPGGPYENLEIRCFDRERDPEWNDFEYRFISKKPSPTFELPRQELYARMEAPKGELGIFLIGDQSGFPWRWKIRPPGFINLQILPQLVKRMKLADIMTILGSIDIIMGEVDR</sequence>
<protein>
    <recommendedName>
        <fullName evidence="1">NAD(P)H-quinone oxidoreductase subunit H, chloroplastic</fullName>
        <ecNumber evidence="1">7.1.1.-</ecNumber>
    </recommendedName>
    <alternativeName>
        <fullName>NAD(P)H dehydrogenase subunit H</fullName>
    </alternativeName>
    <alternativeName>
        <fullName evidence="1">NADH-plastoquinone oxidoreductase 49 kDa subunit</fullName>
    </alternativeName>
    <alternativeName>
        <fullName evidence="1">NADH-plastoquinone oxidoreductase subunit H</fullName>
    </alternativeName>
</protein>
<name>NDHH_GOSHI</name>
<proteinExistence type="inferred from homology"/>
<keyword id="KW-0150">Chloroplast</keyword>
<keyword id="KW-0472">Membrane</keyword>
<keyword id="KW-0520">NAD</keyword>
<keyword id="KW-0521">NADP</keyword>
<keyword id="KW-0934">Plastid</keyword>
<keyword id="KW-0618">Plastoquinone</keyword>
<keyword id="KW-0874">Quinone</keyword>
<keyword id="KW-1185">Reference proteome</keyword>
<keyword id="KW-0793">Thylakoid</keyword>
<keyword id="KW-1278">Translocase</keyword>
<keyword id="KW-0813">Transport</keyword>
<comment type="function">
    <text evidence="1">NDH shuttles electrons from NAD(P)H:plastoquinone, via FMN and iron-sulfur (Fe-S) centers, to quinones in the photosynthetic chain and possibly in a chloroplast respiratory chain. The immediate electron acceptor for the enzyme in this species is believed to be plastoquinone. Couples the redox reaction to proton translocation, and thus conserves the redox energy in a proton gradient.</text>
</comment>
<comment type="catalytic activity">
    <reaction evidence="1">
        <text>a plastoquinone + NADH + (n+1) H(+)(in) = a plastoquinol + NAD(+) + n H(+)(out)</text>
        <dbReference type="Rhea" id="RHEA:42608"/>
        <dbReference type="Rhea" id="RHEA-COMP:9561"/>
        <dbReference type="Rhea" id="RHEA-COMP:9562"/>
        <dbReference type="ChEBI" id="CHEBI:15378"/>
        <dbReference type="ChEBI" id="CHEBI:17757"/>
        <dbReference type="ChEBI" id="CHEBI:57540"/>
        <dbReference type="ChEBI" id="CHEBI:57945"/>
        <dbReference type="ChEBI" id="CHEBI:62192"/>
    </reaction>
</comment>
<comment type="catalytic activity">
    <reaction evidence="1">
        <text>a plastoquinone + NADPH + (n+1) H(+)(in) = a plastoquinol + NADP(+) + n H(+)(out)</text>
        <dbReference type="Rhea" id="RHEA:42612"/>
        <dbReference type="Rhea" id="RHEA-COMP:9561"/>
        <dbReference type="Rhea" id="RHEA-COMP:9562"/>
        <dbReference type="ChEBI" id="CHEBI:15378"/>
        <dbReference type="ChEBI" id="CHEBI:17757"/>
        <dbReference type="ChEBI" id="CHEBI:57783"/>
        <dbReference type="ChEBI" id="CHEBI:58349"/>
        <dbReference type="ChEBI" id="CHEBI:62192"/>
    </reaction>
</comment>
<comment type="subunit">
    <text evidence="1">NDH is composed of at least 16 different subunits, 5 of which are encoded in the nucleus.</text>
</comment>
<comment type="subcellular location">
    <subcellularLocation>
        <location evidence="1">Plastid</location>
        <location evidence="1">Chloroplast thylakoid membrane</location>
        <topology evidence="1">Peripheral membrane protein</topology>
        <orientation evidence="1">Stromal side</orientation>
    </subcellularLocation>
</comment>
<comment type="similarity">
    <text evidence="1">Belongs to the complex I 49 kDa subunit family.</text>
</comment>
<organism>
    <name type="scientific">Gossypium hirsutum</name>
    <name type="common">Upland cotton</name>
    <name type="synonym">Gossypium mexicanum</name>
    <dbReference type="NCBI Taxonomy" id="3635"/>
    <lineage>
        <taxon>Eukaryota</taxon>
        <taxon>Viridiplantae</taxon>
        <taxon>Streptophyta</taxon>
        <taxon>Embryophyta</taxon>
        <taxon>Tracheophyta</taxon>
        <taxon>Spermatophyta</taxon>
        <taxon>Magnoliopsida</taxon>
        <taxon>eudicotyledons</taxon>
        <taxon>Gunneridae</taxon>
        <taxon>Pentapetalae</taxon>
        <taxon>rosids</taxon>
        <taxon>malvids</taxon>
        <taxon>Malvales</taxon>
        <taxon>Malvaceae</taxon>
        <taxon>Malvoideae</taxon>
        <taxon>Gossypium</taxon>
    </lineage>
</organism>
<feature type="chain" id="PRO_0000357991" description="NAD(P)H-quinone oxidoreductase subunit H, chloroplastic">
    <location>
        <begin position="1"/>
        <end position="393"/>
    </location>
</feature>
<accession>Q2L953</accession>
<gene>
    <name evidence="1" type="primary">ndhH</name>
</gene>
<dbReference type="EC" id="7.1.1.-" evidence="1"/>
<dbReference type="EMBL" id="DQ345959">
    <property type="protein sequence ID" value="ABC73676.1"/>
    <property type="molecule type" value="Genomic_DNA"/>
</dbReference>
<dbReference type="RefSeq" id="YP_538984.1">
    <property type="nucleotide sequence ID" value="NC_007944.1"/>
</dbReference>
<dbReference type="SMR" id="Q2L953"/>
<dbReference type="GeneID" id="3989235"/>
<dbReference type="KEGG" id="ghi:3989235"/>
<dbReference type="OrthoDB" id="28780at41938"/>
<dbReference type="Proteomes" id="UP000189702">
    <property type="component" value="Chloroplast Pltd"/>
</dbReference>
<dbReference type="GO" id="GO:0009535">
    <property type="term" value="C:chloroplast thylakoid membrane"/>
    <property type="evidence" value="ECO:0007669"/>
    <property type="project" value="UniProtKB-SubCell"/>
</dbReference>
<dbReference type="GO" id="GO:0051287">
    <property type="term" value="F:NAD binding"/>
    <property type="evidence" value="ECO:0007669"/>
    <property type="project" value="InterPro"/>
</dbReference>
<dbReference type="GO" id="GO:0016655">
    <property type="term" value="F:oxidoreductase activity, acting on NAD(P)H, quinone or similar compound as acceptor"/>
    <property type="evidence" value="ECO:0007669"/>
    <property type="project" value="UniProtKB-UniRule"/>
</dbReference>
<dbReference type="GO" id="GO:0048038">
    <property type="term" value="F:quinone binding"/>
    <property type="evidence" value="ECO:0007669"/>
    <property type="project" value="UniProtKB-KW"/>
</dbReference>
<dbReference type="GO" id="GO:0019684">
    <property type="term" value="P:photosynthesis, light reaction"/>
    <property type="evidence" value="ECO:0007669"/>
    <property type="project" value="UniProtKB-UniRule"/>
</dbReference>
<dbReference type="FunFam" id="1.10.645.10:FF:000003">
    <property type="entry name" value="NAD(P)H-quinone oxidoreductase subunit H, chloroplastic"/>
    <property type="match status" value="1"/>
</dbReference>
<dbReference type="Gene3D" id="1.10.645.10">
    <property type="entry name" value="Cytochrome-c3 Hydrogenase, chain B"/>
    <property type="match status" value="1"/>
</dbReference>
<dbReference type="HAMAP" id="MF_01358">
    <property type="entry name" value="NDH1_NuoD"/>
    <property type="match status" value="1"/>
</dbReference>
<dbReference type="InterPro" id="IPR001135">
    <property type="entry name" value="NADH_Q_OxRdtase_suD"/>
</dbReference>
<dbReference type="InterPro" id="IPR014029">
    <property type="entry name" value="NADH_UbQ_OxRdtase_49kDa_CS"/>
</dbReference>
<dbReference type="InterPro" id="IPR022885">
    <property type="entry name" value="NDH1_su_D/H"/>
</dbReference>
<dbReference type="InterPro" id="IPR029014">
    <property type="entry name" value="NiFe-Hase_large"/>
</dbReference>
<dbReference type="NCBIfam" id="NF004739">
    <property type="entry name" value="PRK06075.1"/>
    <property type="match status" value="1"/>
</dbReference>
<dbReference type="NCBIfam" id="NF005649">
    <property type="entry name" value="PRK07415.1"/>
    <property type="match status" value="1"/>
</dbReference>
<dbReference type="PANTHER" id="PTHR11993:SF10">
    <property type="entry name" value="NADH DEHYDROGENASE [UBIQUINONE] IRON-SULFUR PROTEIN 2, MITOCHONDRIAL"/>
    <property type="match status" value="1"/>
</dbReference>
<dbReference type="PANTHER" id="PTHR11993">
    <property type="entry name" value="NADH-UBIQUINONE OXIDOREDUCTASE 49 KDA SUBUNIT"/>
    <property type="match status" value="1"/>
</dbReference>
<dbReference type="Pfam" id="PF00346">
    <property type="entry name" value="Complex1_49kDa"/>
    <property type="match status" value="1"/>
</dbReference>
<dbReference type="SUPFAM" id="SSF56762">
    <property type="entry name" value="HydB/Nqo4-like"/>
    <property type="match status" value="1"/>
</dbReference>
<dbReference type="PROSITE" id="PS00535">
    <property type="entry name" value="COMPLEX1_49K"/>
    <property type="match status" value="1"/>
</dbReference>
<reference key="1">
    <citation type="journal article" date="2006" name="BMC Genomics">
        <title>The complete chloroplast genome sequence of Gossypium hirsutum: organization and phylogenetic relationships to other angiosperms.</title>
        <authorList>
            <person name="Lee S.-B."/>
            <person name="Kaittanis C."/>
            <person name="Jansen R.K."/>
            <person name="Hostetler J.B."/>
            <person name="Tallon L.J."/>
            <person name="Town C.D."/>
            <person name="Daniell H."/>
        </authorList>
    </citation>
    <scope>NUCLEOTIDE SEQUENCE [LARGE SCALE GENOMIC DNA]</scope>
    <source>
        <strain>cv. Coker 310FR</strain>
    </source>
</reference>
<geneLocation type="chloroplast"/>
<evidence type="ECO:0000255" key="1">
    <source>
        <dbReference type="HAMAP-Rule" id="MF_01358"/>
    </source>
</evidence>